<organism>
    <name type="scientific">Saccharomyces cerevisiae (strain ATCC 204508 / S288c)</name>
    <name type="common">Baker's yeast</name>
    <dbReference type="NCBI Taxonomy" id="559292"/>
    <lineage>
        <taxon>Eukaryota</taxon>
        <taxon>Fungi</taxon>
        <taxon>Dikarya</taxon>
        <taxon>Ascomycota</taxon>
        <taxon>Saccharomycotina</taxon>
        <taxon>Saccharomycetes</taxon>
        <taxon>Saccharomycetales</taxon>
        <taxon>Saccharomycetaceae</taxon>
        <taxon>Saccharomyces</taxon>
    </lineage>
</organism>
<dbReference type="EC" id="2.3.2.23"/>
<dbReference type="EMBL" id="X99443">
    <property type="protein sequence ID" value="CAA67806.1"/>
    <property type="molecule type" value="Genomic_DNA"/>
</dbReference>
<dbReference type="EMBL" id="Z50111">
    <property type="protein sequence ID" value="CAA90451.1"/>
    <property type="molecule type" value="Genomic_DNA"/>
</dbReference>
<dbReference type="EMBL" id="BK006938">
    <property type="protein sequence ID" value="DAA11939.1"/>
    <property type="molecule type" value="Genomic_DNA"/>
</dbReference>
<dbReference type="PIR" id="S58092">
    <property type="entry name" value="S58092"/>
</dbReference>
<dbReference type="RefSeq" id="NP_010377.3">
    <property type="nucleotide sequence ID" value="NM_001180400.3"/>
</dbReference>
<dbReference type="PDB" id="1JAT">
    <property type="method" value="X-ray"/>
    <property type="resolution" value="1.60 A"/>
    <property type="chains" value="A=2-153"/>
</dbReference>
<dbReference type="PDB" id="1JBB">
    <property type="method" value="X-ray"/>
    <property type="resolution" value="2.00 A"/>
    <property type="chains" value="A/B=1-153"/>
</dbReference>
<dbReference type="PDB" id="2GMI">
    <property type="method" value="X-ray"/>
    <property type="resolution" value="2.50 A"/>
    <property type="chains" value="A=1-152"/>
</dbReference>
<dbReference type="PDB" id="4FH1">
    <property type="method" value="X-ray"/>
    <property type="resolution" value="2.61 A"/>
    <property type="chains" value="A=1-152"/>
</dbReference>
<dbReference type="PDB" id="5OJW">
    <property type="method" value="X-ray"/>
    <property type="resolution" value="2.00 A"/>
    <property type="chains" value="A=1-152"/>
</dbReference>
<dbReference type="PDB" id="6ZHS">
    <property type="method" value="X-ray"/>
    <property type="resolution" value="2.35 A"/>
    <property type="chains" value="B/C=1-153"/>
</dbReference>
<dbReference type="PDB" id="6ZHT">
    <property type="method" value="X-ray"/>
    <property type="resolution" value="2.30 A"/>
    <property type="chains" value="B=1-152"/>
</dbReference>
<dbReference type="PDBsum" id="1JAT"/>
<dbReference type="PDBsum" id="1JBB"/>
<dbReference type="PDBsum" id="2GMI"/>
<dbReference type="PDBsum" id="4FH1"/>
<dbReference type="PDBsum" id="5OJW"/>
<dbReference type="PDBsum" id="6ZHS"/>
<dbReference type="PDBsum" id="6ZHT"/>
<dbReference type="SMR" id="P52490"/>
<dbReference type="BioGRID" id="32149">
    <property type="interactions" value="285"/>
</dbReference>
<dbReference type="ComplexPortal" id="CPX-2541">
    <property type="entry name" value="MMS2-UBC13 ubiquitin ligase complex"/>
</dbReference>
<dbReference type="DIP" id="DIP-5486N"/>
<dbReference type="FunCoup" id="P52490">
    <property type="interactions" value="1112"/>
</dbReference>
<dbReference type="IntAct" id="P52490">
    <property type="interactions" value="20"/>
</dbReference>
<dbReference type="MINT" id="P52490"/>
<dbReference type="STRING" id="4932.YDR092W"/>
<dbReference type="iPTMnet" id="P52490"/>
<dbReference type="PaxDb" id="4932-YDR092W"/>
<dbReference type="PeptideAtlas" id="P52490"/>
<dbReference type="TopDownProteomics" id="P52490"/>
<dbReference type="EnsemblFungi" id="YDR092W_mRNA">
    <property type="protein sequence ID" value="YDR092W"/>
    <property type="gene ID" value="YDR092W"/>
</dbReference>
<dbReference type="GeneID" id="851666"/>
<dbReference type="KEGG" id="sce:YDR092W"/>
<dbReference type="AGR" id="SGD:S000002499"/>
<dbReference type="SGD" id="S000002499">
    <property type="gene designation" value="UBC13"/>
</dbReference>
<dbReference type="VEuPathDB" id="FungiDB:YDR092W"/>
<dbReference type="eggNOG" id="KOG0417">
    <property type="taxonomic scope" value="Eukaryota"/>
</dbReference>
<dbReference type="GeneTree" id="ENSGT00940000166520"/>
<dbReference type="HOGENOM" id="CLU_030988_13_2_1"/>
<dbReference type="InParanoid" id="P52490"/>
<dbReference type="OMA" id="AEPHEDN"/>
<dbReference type="OrthoDB" id="7851174at2759"/>
<dbReference type="BioCyc" id="YEAST:G3O-29697-MONOMER"/>
<dbReference type="Reactome" id="R-SCE-5205685">
    <property type="pathway name" value="PINK1-PRKN Mediated Mitophagy"/>
</dbReference>
<dbReference type="Reactome" id="R-SCE-5693565">
    <property type="pathway name" value="Recruitment and ATM-mediated phosphorylation of repair and signaling proteins at DNA double strand breaks"/>
</dbReference>
<dbReference type="Reactome" id="R-SCE-8866654">
    <property type="pathway name" value="E3 ubiquitin ligases ubiquitinate target proteins"/>
</dbReference>
<dbReference type="Reactome" id="R-SCE-9020702">
    <property type="pathway name" value="Interleukin-1 signaling"/>
</dbReference>
<dbReference type="Reactome" id="R-SCE-9646399">
    <property type="pathway name" value="Aggrephagy"/>
</dbReference>
<dbReference type="Reactome" id="R-SCE-983168">
    <property type="pathway name" value="Antigen processing: Ubiquitination &amp; Proteasome degradation"/>
</dbReference>
<dbReference type="UniPathway" id="UPA00143"/>
<dbReference type="BioGRID-ORCS" id="851666">
    <property type="hits" value="2 hits in 10 CRISPR screens"/>
</dbReference>
<dbReference type="EvolutionaryTrace" id="P52490"/>
<dbReference type="PRO" id="PR:P52490"/>
<dbReference type="Proteomes" id="UP000002311">
    <property type="component" value="Chromosome IV"/>
</dbReference>
<dbReference type="RNAct" id="P52490">
    <property type="molecule type" value="protein"/>
</dbReference>
<dbReference type="GO" id="GO:0005737">
    <property type="term" value="C:cytoplasm"/>
    <property type="evidence" value="ECO:0000314"/>
    <property type="project" value="SGD"/>
</dbReference>
<dbReference type="GO" id="GO:0005829">
    <property type="term" value="C:cytosol"/>
    <property type="evidence" value="ECO:0000304"/>
    <property type="project" value="Reactome"/>
</dbReference>
<dbReference type="GO" id="GO:0000329">
    <property type="term" value="C:fungal-type vacuole membrane"/>
    <property type="evidence" value="ECO:0000314"/>
    <property type="project" value="SGD"/>
</dbReference>
<dbReference type="GO" id="GO:0005634">
    <property type="term" value="C:nucleus"/>
    <property type="evidence" value="ECO:0000314"/>
    <property type="project" value="SGD"/>
</dbReference>
<dbReference type="GO" id="GO:0031371">
    <property type="term" value="C:ubiquitin conjugating enzyme complex"/>
    <property type="evidence" value="ECO:0000353"/>
    <property type="project" value="SGD"/>
</dbReference>
<dbReference type="GO" id="GO:0005524">
    <property type="term" value="F:ATP binding"/>
    <property type="evidence" value="ECO:0007669"/>
    <property type="project" value="UniProtKB-KW"/>
</dbReference>
<dbReference type="GO" id="GO:0061631">
    <property type="term" value="F:ubiquitin conjugating enzyme activity"/>
    <property type="evidence" value="ECO:0000318"/>
    <property type="project" value="GO_Central"/>
</dbReference>
<dbReference type="GO" id="GO:0010994">
    <property type="term" value="P:free ubiquitin chain polymerization"/>
    <property type="evidence" value="ECO:0000314"/>
    <property type="project" value="SGD"/>
</dbReference>
<dbReference type="GO" id="GO:0006301">
    <property type="term" value="P:postreplication repair"/>
    <property type="evidence" value="ECO:0000315"/>
    <property type="project" value="SGD"/>
</dbReference>
<dbReference type="GO" id="GO:0070534">
    <property type="term" value="P:protein K63-linked ubiquitination"/>
    <property type="evidence" value="ECO:0000318"/>
    <property type="project" value="GO_Central"/>
</dbReference>
<dbReference type="GO" id="GO:0000209">
    <property type="term" value="P:protein polyubiquitination"/>
    <property type="evidence" value="ECO:0000314"/>
    <property type="project" value="SGD"/>
</dbReference>
<dbReference type="GO" id="GO:0044395">
    <property type="term" value="P:protein targeting to vacuolar membrane"/>
    <property type="evidence" value="ECO:0000315"/>
    <property type="project" value="SGD"/>
</dbReference>
<dbReference type="CDD" id="cd23813">
    <property type="entry name" value="UBCc_UBE2N"/>
    <property type="match status" value="1"/>
</dbReference>
<dbReference type="FunFam" id="3.10.110.10:FF:000020">
    <property type="entry name" value="Ubiquitin-conjugating enzyme E2 N"/>
    <property type="match status" value="1"/>
</dbReference>
<dbReference type="Gene3D" id="3.10.110.10">
    <property type="entry name" value="Ubiquitin Conjugating Enzyme"/>
    <property type="match status" value="1"/>
</dbReference>
<dbReference type="InterPro" id="IPR000608">
    <property type="entry name" value="UBQ-conjugat_E2_core"/>
</dbReference>
<dbReference type="InterPro" id="IPR023313">
    <property type="entry name" value="UBQ-conjugating_AS"/>
</dbReference>
<dbReference type="InterPro" id="IPR016135">
    <property type="entry name" value="UBQ-conjugating_enzyme/RWD"/>
</dbReference>
<dbReference type="PANTHER" id="PTHR24068">
    <property type="entry name" value="UBIQUITIN-CONJUGATING ENZYME E2"/>
    <property type="match status" value="1"/>
</dbReference>
<dbReference type="Pfam" id="PF00179">
    <property type="entry name" value="UQ_con"/>
    <property type="match status" value="1"/>
</dbReference>
<dbReference type="SMART" id="SM00212">
    <property type="entry name" value="UBCc"/>
    <property type="match status" value="1"/>
</dbReference>
<dbReference type="SUPFAM" id="SSF54495">
    <property type="entry name" value="UBC-like"/>
    <property type="match status" value="1"/>
</dbReference>
<dbReference type="PROSITE" id="PS00183">
    <property type="entry name" value="UBC_1"/>
    <property type="match status" value="1"/>
</dbReference>
<dbReference type="PROSITE" id="PS50127">
    <property type="entry name" value="UBC_2"/>
    <property type="match status" value="1"/>
</dbReference>
<reference key="1">
    <citation type="journal article" date="1996" name="J. Biol. Chem.">
        <title>Identification of a novel family of ubiquitin-conjugating enzymes with distinct amino-terminal extensions.</title>
        <authorList>
            <person name="Matuschewski K."/>
            <person name="Hauser H.P."/>
            <person name="Treier M."/>
            <person name="Jentsch S."/>
        </authorList>
    </citation>
    <scope>NUCLEOTIDE SEQUENCE [GENOMIC DNA]</scope>
    <source>
        <strain>ATCC 200912 / DF5</strain>
    </source>
</reference>
<reference key="2">
    <citation type="journal article" date="1997" name="Nature">
        <title>The nucleotide sequence of Saccharomyces cerevisiae chromosome IV.</title>
        <authorList>
            <person name="Jacq C."/>
            <person name="Alt-Moerbe J."/>
            <person name="Andre B."/>
            <person name="Arnold W."/>
            <person name="Bahr A."/>
            <person name="Ballesta J.P.G."/>
            <person name="Bargues M."/>
            <person name="Baron L."/>
            <person name="Becker A."/>
            <person name="Biteau N."/>
            <person name="Bloecker H."/>
            <person name="Blugeon C."/>
            <person name="Boskovic J."/>
            <person name="Brandt P."/>
            <person name="Brueckner M."/>
            <person name="Buitrago M.J."/>
            <person name="Coster F."/>
            <person name="Delaveau T."/>
            <person name="del Rey F."/>
            <person name="Dujon B."/>
            <person name="Eide L.G."/>
            <person name="Garcia-Cantalejo J.M."/>
            <person name="Goffeau A."/>
            <person name="Gomez-Peris A."/>
            <person name="Granotier C."/>
            <person name="Hanemann V."/>
            <person name="Hankeln T."/>
            <person name="Hoheisel J.D."/>
            <person name="Jaeger W."/>
            <person name="Jimenez A."/>
            <person name="Jonniaux J.-L."/>
            <person name="Kraemer C."/>
            <person name="Kuester H."/>
            <person name="Laamanen P."/>
            <person name="Legros Y."/>
            <person name="Louis E.J."/>
            <person name="Moeller-Rieker S."/>
            <person name="Monnet A."/>
            <person name="Moro M."/>
            <person name="Mueller-Auer S."/>
            <person name="Nussbaumer B."/>
            <person name="Paricio N."/>
            <person name="Paulin L."/>
            <person name="Perea J."/>
            <person name="Perez-Alonso M."/>
            <person name="Perez-Ortin J.E."/>
            <person name="Pohl T.M."/>
            <person name="Prydz H."/>
            <person name="Purnelle B."/>
            <person name="Rasmussen S.W."/>
            <person name="Remacha M.A."/>
            <person name="Revuelta J.L."/>
            <person name="Rieger M."/>
            <person name="Salom D."/>
            <person name="Saluz H.P."/>
            <person name="Saiz J.E."/>
            <person name="Saren A.-M."/>
            <person name="Schaefer M."/>
            <person name="Scharfe M."/>
            <person name="Schmidt E.R."/>
            <person name="Schneider C."/>
            <person name="Scholler P."/>
            <person name="Schwarz S."/>
            <person name="Soler-Mira A."/>
            <person name="Urrestarazu L.A."/>
            <person name="Verhasselt P."/>
            <person name="Vissers S."/>
            <person name="Voet M."/>
            <person name="Volckaert G."/>
            <person name="Wagner G."/>
            <person name="Wambutt R."/>
            <person name="Wedler E."/>
            <person name="Wedler H."/>
            <person name="Woelfl S."/>
            <person name="Harris D.E."/>
            <person name="Bowman S."/>
            <person name="Brown D."/>
            <person name="Churcher C.M."/>
            <person name="Connor R."/>
            <person name="Dedman K."/>
            <person name="Gentles S."/>
            <person name="Hamlin N."/>
            <person name="Hunt S."/>
            <person name="Jones L."/>
            <person name="McDonald S."/>
            <person name="Murphy L.D."/>
            <person name="Niblett D."/>
            <person name="Odell C."/>
            <person name="Oliver K."/>
            <person name="Rajandream M.A."/>
            <person name="Richards C."/>
            <person name="Shore L."/>
            <person name="Walsh S.V."/>
            <person name="Barrell B.G."/>
            <person name="Dietrich F.S."/>
            <person name="Mulligan J.T."/>
            <person name="Allen E."/>
            <person name="Araujo R."/>
            <person name="Aviles E."/>
            <person name="Berno A."/>
            <person name="Carpenter J."/>
            <person name="Chen E."/>
            <person name="Cherry J.M."/>
            <person name="Chung E."/>
            <person name="Duncan M."/>
            <person name="Hunicke-Smith S."/>
            <person name="Hyman R.W."/>
            <person name="Komp C."/>
            <person name="Lashkari D."/>
            <person name="Lew H."/>
            <person name="Lin D."/>
            <person name="Mosedale D."/>
            <person name="Nakahara K."/>
            <person name="Namath A."/>
            <person name="Oefner P."/>
            <person name="Oh C."/>
            <person name="Petel F.X."/>
            <person name="Roberts D."/>
            <person name="Schramm S."/>
            <person name="Schroeder M."/>
            <person name="Shogren T."/>
            <person name="Shroff N."/>
            <person name="Winant A."/>
            <person name="Yelton M.A."/>
            <person name="Botstein D."/>
            <person name="Davis R.W."/>
            <person name="Johnston M."/>
            <person name="Andrews S."/>
            <person name="Brinkman R."/>
            <person name="Cooper J."/>
            <person name="Ding H."/>
            <person name="Du Z."/>
            <person name="Favello A."/>
            <person name="Fulton L."/>
            <person name="Gattung S."/>
            <person name="Greco T."/>
            <person name="Hallsworth K."/>
            <person name="Hawkins J."/>
            <person name="Hillier L.W."/>
            <person name="Jier M."/>
            <person name="Johnson D."/>
            <person name="Johnston L."/>
            <person name="Kirsten J."/>
            <person name="Kucaba T."/>
            <person name="Langston Y."/>
            <person name="Latreille P."/>
            <person name="Le T."/>
            <person name="Mardis E."/>
            <person name="Menezes S."/>
            <person name="Miller N."/>
            <person name="Nhan M."/>
            <person name="Pauley A."/>
            <person name="Peluso D."/>
            <person name="Rifkin L."/>
            <person name="Riles L."/>
            <person name="Taich A."/>
            <person name="Trevaskis E."/>
            <person name="Vignati D."/>
            <person name="Wilcox L."/>
            <person name="Wohldman P."/>
            <person name="Vaudin M."/>
            <person name="Wilson R."/>
            <person name="Waterston R."/>
            <person name="Albermann K."/>
            <person name="Hani J."/>
            <person name="Heumann K."/>
            <person name="Kleine K."/>
            <person name="Mewes H.-W."/>
            <person name="Zollner A."/>
            <person name="Zaccaria P."/>
        </authorList>
    </citation>
    <scope>NUCLEOTIDE SEQUENCE [LARGE SCALE GENOMIC DNA]</scope>
    <source>
        <strain>ATCC 204508 / S288c</strain>
    </source>
</reference>
<reference key="3">
    <citation type="journal article" date="2014" name="G3 (Bethesda)">
        <title>The reference genome sequence of Saccharomyces cerevisiae: Then and now.</title>
        <authorList>
            <person name="Engel S.R."/>
            <person name="Dietrich F.S."/>
            <person name="Fisk D.G."/>
            <person name="Binkley G."/>
            <person name="Balakrishnan R."/>
            <person name="Costanzo M.C."/>
            <person name="Dwight S.S."/>
            <person name="Hitz B.C."/>
            <person name="Karra K."/>
            <person name="Nash R.S."/>
            <person name="Weng S."/>
            <person name="Wong E.D."/>
            <person name="Lloyd P."/>
            <person name="Skrzypek M.S."/>
            <person name="Miyasato S.R."/>
            <person name="Simison M."/>
            <person name="Cherry J.M."/>
        </authorList>
    </citation>
    <scope>GENOME REANNOTATION</scope>
    <source>
        <strain>ATCC 204508 / S288c</strain>
    </source>
</reference>
<reference key="4">
    <citation type="journal article" date="2003" name="Nature">
        <title>Global analysis of protein expression in yeast.</title>
        <authorList>
            <person name="Ghaemmaghami S."/>
            <person name="Huh W.-K."/>
            <person name="Bower K."/>
            <person name="Howson R.W."/>
            <person name="Belle A."/>
            <person name="Dephoure N."/>
            <person name="O'Shea E.K."/>
            <person name="Weissman J.S."/>
        </authorList>
    </citation>
    <scope>LEVEL OF PROTEIN EXPRESSION [LARGE SCALE ANALYSIS]</scope>
</reference>
<reference key="5">
    <citation type="journal article" date="2012" name="Proteomics">
        <title>Sites of ubiquitin attachment in Saccharomyces cerevisiae.</title>
        <authorList>
            <person name="Starita L.M."/>
            <person name="Lo R.S."/>
            <person name="Eng J.K."/>
            <person name="von Haller P.D."/>
            <person name="Fields S."/>
        </authorList>
    </citation>
    <scope>UBIQUITINATION [LARGE SCALE ANALYSIS] AT LYS-92</scope>
    <scope>IDENTIFICATION BY MASS SPECTROMETRY [LARGE SCALE ANALYSIS]</scope>
</reference>
<reference key="6">
    <citation type="journal article" date="2001" name="Cell">
        <title>Molecular insights into polyubiquitin chain assembly: crystal structure of the Mms2/Ubc13 heterodimer.</title>
        <authorList>
            <person name="VanDemark A.P."/>
            <person name="Hofmann R.M."/>
            <person name="Tsui C."/>
            <person name="Pickart C.M."/>
            <person name="Wolberger C."/>
        </authorList>
    </citation>
    <scope>X-RAY CRYSTALLOGRAPHY (1.6 ANGSTROMS) IN COMPLEX WITH MMS2</scope>
    <scope>MUTAGENESIS OF GLU-55</scope>
</reference>
<keyword id="KW-0002">3D-structure</keyword>
<keyword id="KW-0067">ATP-binding</keyword>
<keyword id="KW-1017">Isopeptide bond</keyword>
<keyword id="KW-0547">Nucleotide-binding</keyword>
<keyword id="KW-1185">Reference proteome</keyword>
<keyword id="KW-0808">Transferase</keyword>
<keyword id="KW-0832">Ubl conjugation</keyword>
<keyword id="KW-0833">Ubl conjugation pathway</keyword>
<gene>
    <name type="primary">UBC13</name>
    <name type="ordered locus">YDR092W</name>
    <name type="ORF">YD6652.04</name>
</gene>
<evidence type="ECO:0000255" key="1">
    <source>
        <dbReference type="PROSITE-ProRule" id="PRU00388"/>
    </source>
</evidence>
<evidence type="ECO:0000255" key="2">
    <source>
        <dbReference type="PROSITE-ProRule" id="PRU10133"/>
    </source>
</evidence>
<evidence type="ECO:0000269" key="3">
    <source>
    </source>
</evidence>
<evidence type="ECO:0000269" key="4">
    <source>
    </source>
</evidence>
<evidence type="ECO:0007744" key="5">
    <source>
    </source>
</evidence>
<evidence type="ECO:0007829" key="6">
    <source>
        <dbReference type="PDB" id="1JAT"/>
    </source>
</evidence>
<accession>P52490</accession>
<accession>D6VS79</accession>
<sequence length="153" mass="17468">MASLPKRIIKETEKLVSDPVPGITAEPHDDNLRYFQVTIEGPEQSPYEDGIFELELYLPDDYPMEAPKVRFLTKIYHPNIDRLGRICLDVLKTNWSPALQIRTVLLSIQALLASPNPNDPLANDVAEDWIKNEQGAKAKAREWTKLYAKKKPE</sequence>
<protein>
    <recommendedName>
        <fullName>Ubiquitin-conjugating enzyme E2 13</fullName>
        <ecNumber>2.3.2.23</ecNumber>
    </recommendedName>
    <alternativeName>
        <fullName>E2 ubiquitin-conjugating enzyme 13</fullName>
    </alternativeName>
    <alternativeName>
        <fullName>Ubiquitin carrier protein 13</fullName>
    </alternativeName>
    <alternativeName>
        <fullName>Ubiquitin-protein ligase 13</fullName>
    </alternativeName>
</protein>
<feature type="chain" id="PRO_0000082565" description="Ubiquitin-conjugating enzyme E2 13">
    <location>
        <begin position="1"/>
        <end position="153"/>
    </location>
</feature>
<feature type="domain" description="UBC core" evidence="1">
    <location>
        <begin position="3"/>
        <end position="149"/>
    </location>
</feature>
<feature type="active site" description="Glycyl thioester intermediate" evidence="1">
    <location>
        <position position="87"/>
    </location>
</feature>
<feature type="cross-link" description="Glycyl lysine isopeptide (Lys-Gly) (interchain with G-Cter in ubiquitin)" evidence="5">
    <location>
        <position position="92"/>
    </location>
</feature>
<feature type="mutagenesis site" description="Strongly reduces MMS2 binding and interferes with error-free DNA repair." evidence="3">
    <original>E</original>
    <variation>A</variation>
    <location>
        <position position="55"/>
    </location>
</feature>
<feature type="mutagenesis site" description="Abolishes ubiquitin chain elongation. No effect on thioester formation at the active site.">
    <original>D</original>
    <variation>R</variation>
    <location>
        <position position="81"/>
    </location>
</feature>
<feature type="mutagenesis site" description="Lowers rate of ubiquitin chain elongation. No effect on thioester formation at the active site.">
    <original>A</original>
    <variation>R</variation>
    <location>
        <position position="110"/>
    </location>
</feature>
<feature type="helix" evidence="6">
    <location>
        <begin position="6"/>
        <end position="17"/>
    </location>
</feature>
<feature type="strand" evidence="6">
    <location>
        <begin position="23"/>
        <end position="28"/>
    </location>
</feature>
<feature type="strand" evidence="6">
    <location>
        <begin position="31"/>
        <end position="40"/>
    </location>
</feature>
<feature type="turn" evidence="6">
    <location>
        <begin position="46"/>
        <end position="49"/>
    </location>
</feature>
<feature type="strand" evidence="6">
    <location>
        <begin position="50"/>
        <end position="57"/>
    </location>
</feature>
<feature type="turn" evidence="6">
    <location>
        <begin position="60"/>
        <end position="64"/>
    </location>
</feature>
<feature type="strand" evidence="6">
    <location>
        <begin position="68"/>
        <end position="71"/>
    </location>
</feature>
<feature type="helix" evidence="6">
    <location>
        <begin position="89"/>
        <end position="91"/>
    </location>
</feature>
<feature type="turn" evidence="6">
    <location>
        <begin position="92"/>
        <end position="94"/>
    </location>
</feature>
<feature type="helix" evidence="6">
    <location>
        <begin position="101"/>
        <end position="113"/>
    </location>
</feature>
<feature type="helix" evidence="6">
    <location>
        <begin position="126"/>
        <end position="131"/>
    </location>
</feature>
<feature type="helix" evidence="6">
    <location>
        <begin position="133"/>
        <end position="147"/>
    </location>
</feature>
<feature type="strand" evidence="6">
    <location>
        <begin position="148"/>
        <end position="150"/>
    </location>
</feature>
<name>UBC13_YEAST</name>
<proteinExistence type="evidence at protein level"/>
<comment type="function">
    <text>Has a role in the DNA error-free postreplication repair (PRR) pathway. The UBC13/MMS2 heterodimer catalyzes the synthesis of non-canonical poly-ubiquitin chains that are linked through 'Lys-63'.</text>
</comment>
<comment type="catalytic activity">
    <reaction evidence="1 2">
        <text>S-ubiquitinyl-[E1 ubiquitin-activating enzyme]-L-cysteine + [E2 ubiquitin-conjugating enzyme]-L-cysteine = [E1 ubiquitin-activating enzyme]-L-cysteine + S-ubiquitinyl-[E2 ubiquitin-conjugating enzyme]-L-cysteine.</text>
        <dbReference type="EC" id="2.3.2.23"/>
    </reaction>
</comment>
<comment type="pathway">
    <text evidence="1">Protein modification; protein ubiquitination.</text>
</comment>
<comment type="subunit">
    <text evidence="3">Heterodimer with MMS2.</text>
</comment>
<comment type="interaction">
    <interactant intactId="EBI-19777">
        <id>P52490</id>
    </interactant>
    <interactant intactId="EBI-11035">
        <id>P53152</id>
        <label>MMS2</label>
    </interactant>
    <organismsDiffer>false</organismsDiffer>
    <experiments>10</experiments>
</comment>
<comment type="miscellaneous">
    <text evidence="4">Present with 8970 molecules/cell in log phase SD medium.</text>
</comment>
<comment type="similarity">
    <text evidence="1">Belongs to the ubiquitin-conjugating enzyme family.</text>
</comment>